<protein>
    <recommendedName>
        <fullName>EKC/KEOPS complex subunit CGI121</fullName>
    </recommendedName>
</protein>
<proteinExistence type="inferred from homology"/>
<gene>
    <name type="primary">CGI121</name>
    <name type="ordered locus">CNC06740</name>
</gene>
<accession>P0CM64</accession>
<accession>Q55WU5</accession>
<accession>Q5KJF3</accession>
<keyword id="KW-0010">Activator</keyword>
<keyword id="KW-0158">Chromosome</keyword>
<keyword id="KW-0539">Nucleus</keyword>
<keyword id="KW-1185">Reference proteome</keyword>
<keyword id="KW-0779">Telomere</keyword>
<keyword id="KW-0804">Transcription</keyword>
<keyword id="KW-0805">Transcription regulation</keyword>
<keyword id="KW-0819">tRNA processing</keyword>
<reference key="1">
    <citation type="journal article" date="2005" name="Science">
        <title>The genome of the basidiomycetous yeast and human pathogen Cryptococcus neoformans.</title>
        <authorList>
            <person name="Loftus B.J."/>
            <person name="Fung E."/>
            <person name="Roncaglia P."/>
            <person name="Rowley D."/>
            <person name="Amedeo P."/>
            <person name="Bruno D."/>
            <person name="Vamathevan J."/>
            <person name="Miranda M."/>
            <person name="Anderson I.J."/>
            <person name="Fraser J.A."/>
            <person name="Allen J.E."/>
            <person name="Bosdet I.E."/>
            <person name="Brent M.R."/>
            <person name="Chiu R."/>
            <person name="Doering T.L."/>
            <person name="Donlin M.J."/>
            <person name="D'Souza C.A."/>
            <person name="Fox D.S."/>
            <person name="Grinberg V."/>
            <person name="Fu J."/>
            <person name="Fukushima M."/>
            <person name="Haas B.J."/>
            <person name="Huang J.C."/>
            <person name="Janbon G."/>
            <person name="Jones S.J.M."/>
            <person name="Koo H.L."/>
            <person name="Krzywinski M.I."/>
            <person name="Kwon-Chung K.J."/>
            <person name="Lengeler K.B."/>
            <person name="Maiti R."/>
            <person name="Marra M.A."/>
            <person name="Marra R.E."/>
            <person name="Mathewson C.A."/>
            <person name="Mitchell T.G."/>
            <person name="Pertea M."/>
            <person name="Riggs F.R."/>
            <person name="Salzberg S.L."/>
            <person name="Schein J.E."/>
            <person name="Shvartsbeyn A."/>
            <person name="Shin H."/>
            <person name="Shumway M."/>
            <person name="Specht C.A."/>
            <person name="Suh B.B."/>
            <person name="Tenney A."/>
            <person name="Utterback T.R."/>
            <person name="Wickes B.L."/>
            <person name="Wortman J.R."/>
            <person name="Wye N.H."/>
            <person name="Kronstad J.W."/>
            <person name="Lodge J.K."/>
            <person name="Heitman J."/>
            <person name="Davis R.W."/>
            <person name="Fraser C.M."/>
            <person name="Hyman R.W."/>
        </authorList>
    </citation>
    <scope>NUCLEOTIDE SEQUENCE [LARGE SCALE GENOMIC DNA]</scope>
    <source>
        <strain>JEC21 / ATCC MYA-565</strain>
    </source>
</reference>
<comment type="function">
    <text evidence="1">Component of the EKC/KEOPS complex that is required for the formation of a threonylcarbamoyl group on adenosine at position 37 (t(6)A37) in tRNAs that read codons beginning with adenine. The complex is probably involved in the transfer of the threonylcarbamoyl moiety of threonylcarbamoyl-AMP (TC-AMP) to the N6 group of A37. CGI121 acts as an allosteric effector that regulates the t(6)A activity of the complex. The EKC/KEOPS complex also promotes both telomere uncapping and telomere elongation. The complex is required for efficient recruitment of transcriptional coactivators. CGI121 is not required for tRNA modification (By similarity).</text>
</comment>
<comment type="subunit">
    <text evidence="1">Component of the EKC/KEOPS complex composed of at least BUD32, CGI121, GON7, KAE1 and PCC1; the whole complex dimerizes.</text>
</comment>
<comment type="subcellular location">
    <subcellularLocation>
        <location evidence="1">Nucleus</location>
    </subcellularLocation>
    <subcellularLocation>
        <location evidence="1">Chromosome</location>
        <location evidence="1">Telomere</location>
    </subcellularLocation>
</comment>
<comment type="similarity">
    <text evidence="3">Belongs to the CGI121/TPRKB family.</text>
</comment>
<dbReference type="EMBL" id="AE017343">
    <property type="protein sequence ID" value="AAW42616.1"/>
    <property type="molecule type" value="Genomic_DNA"/>
</dbReference>
<dbReference type="RefSeq" id="XP_569923.1">
    <property type="nucleotide sequence ID" value="XM_569923.1"/>
</dbReference>
<dbReference type="SMR" id="P0CM64"/>
<dbReference type="FunCoup" id="P0CM64">
    <property type="interactions" value="183"/>
</dbReference>
<dbReference type="STRING" id="214684.P0CM64"/>
<dbReference type="PaxDb" id="214684-P0CM64"/>
<dbReference type="EnsemblFungi" id="AAW42616">
    <property type="protein sequence ID" value="AAW42616"/>
    <property type="gene ID" value="CNC06740"/>
</dbReference>
<dbReference type="GeneID" id="3256374"/>
<dbReference type="KEGG" id="cne:CNC06740"/>
<dbReference type="VEuPathDB" id="FungiDB:CNC06740"/>
<dbReference type="eggNOG" id="KOG4066">
    <property type="taxonomic scope" value="Eukaryota"/>
</dbReference>
<dbReference type="HOGENOM" id="CLU_065847_1_2_1"/>
<dbReference type="InParanoid" id="P0CM64"/>
<dbReference type="OMA" id="VCARSWD"/>
<dbReference type="OrthoDB" id="329139at2759"/>
<dbReference type="Proteomes" id="UP000002149">
    <property type="component" value="Chromosome 3"/>
</dbReference>
<dbReference type="GO" id="GO:0000781">
    <property type="term" value="C:chromosome, telomeric region"/>
    <property type="evidence" value="ECO:0007669"/>
    <property type="project" value="UniProtKB-SubCell"/>
</dbReference>
<dbReference type="GO" id="GO:0005829">
    <property type="term" value="C:cytosol"/>
    <property type="evidence" value="ECO:0000318"/>
    <property type="project" value="GO_Central"/>
</dbReference>
<dbReference type="GO" id="GO:0000408">
    <property type="term" value="C:EKC/KEOPS complex"/>
    <property type="evidence" value="ECO:0000318"/>
    <property type="project" value="GO_Central"/>
</dbReference>
<dbReference type="GO" id="GO:0005634">
    <property type="term" value="C:nucleus"/>
    <property type="evidence" value="ECO:0000318"/>
    <property type="project" value="GO_Central"/>
</dbReference>
<dbReference type="GO" id="GO:0002949">
    <property type="term" value="P:tRNA threonylcarbamoyladenosine modification"/>
    <property type="evidence" value="ECO:0000318"/>
    <property type="project" value="GO_Central"/>
</dbReference>
<dbReference type="Gene3D" id="3.30.2380.10">
    <property type="entry name" value="CGI121/TPRKB"/>
    <property type="match status" value="1"/>
</dbReference>
<dbReference type="InterPro" id="IPR013926">
    <property type="entry name" value="CGI121/TPRKB"/>
</dbReference>
<dbReference type="InterPro" id="IPR036504">
    <property type="entry name" value="CGI121/TPRKB_sf"/>
</dbReference>
<dbReference type="PANTHER" id="PTHR15840">
    <property type="entry name" value="CGI-121 FAMILY MEMBER"/>
    <property type="match status" value="1"/>
</dbReference>
<dbReference type="PANTHER" id="PTHR15840:SF10">
    <property type="entry name" value="EKC_KEOPS COMPLEX SUBUNIT TPRKB"/>
    <property type="match status" value="1"/>
</dbReference>
<dbReference type="Pfam" id="PF08617">
    <property type="entry name" value="CGI-121"/>
    <property type="match status" value="1"/>
</dbReference>
<dbReference type="SUPFAM" id="SSF143870">
    <property type="entry name" value="PF0523-like"/>
    <property type="match status" value="1"/>
</dbReference>
<organism>
    <name type="scientific">Cryptococcus neoformans var. neoformans serotype D (strain JEC21 / ATCC MYA-565)</name>
    <name type="common">Filobasidiella neoformans</name>
    <dbReference type="NCBI Taxonomy" id="214684"/>
    <lineage>
        <taxon>Eukaryota</taxon>
        <taxon>Fungi</taxon>
        <taxon>Dikarya</taxon>
        <taxon>Basidiomycota</taxon>
        <taxon>Agaricomycotina</taxon>
        <taxon>Tremellomycetes</taxon>
        <taxon>Tremellales</taxon>
        <taxon>Cryptococcaceae</taxon>
        <taxon>Cryptococcus</taxon>
        <taxon>Cryptococcus neoformans species complex</taxon>
    </lineage>
</organism>
<evidence type="ECO:0000250" key="1"/>
<evidence type="ECO:0000256" key="2">
    <source>
        <dbReference type="SAM" id="MobiDB-lite"/>
    </source>
</evidence>
<evidence type="ECO:0000305" key="3"/>
<feature type="chain" id="PRO_0000279211" description="EKC/KEOPS complex subunit CGI121">
    <location>
        <begin position="1"/>
        <end position="229"/>
    </location>
</feature>
<feature type="region of interest" description="Disordered" evidence="2">
    <location>
        <begin position="87"/>
        <end position="120"/>
    </location>
</feature>
<name>CG121_CRYNJ</name>
<sequence length="229" mass="25301">METYAYPAFPPEYSNIHIALFKNVTNAPQIRKRLIEASQMTGPEGDKAREEVDFGFVEANLLVSKEHLLIAILSTLLYAFPSTGPAPTDPPPLSDIADPDVSSLSLSSSSETRQPKTRSHNLHSELLLLLSPNNNITDSIRRHGVSDITTNLAVVKFGKRGDRVEEVYEAMKNVVEGELIGWEGISEGTDWARVDKIYKLNELNALKTADMVEKKRTAVISTVAIKNVI</sequence>